<reference key="1">
    <citation type="journal article" date="2008" name="J. Bacteriol.">
        <title>The pangenome structure of Escherichia coli: comparative genomic analysis of E. coli commensal and pathogenic isolates.</title>
        <authorList>
            <person name="Rasko D.A."/>
            <person name="Rosovitz M.J."/>
            <person name="Myers G.S.A."/>
            <person name="Mongodin E.F."/>
            <person name="Fricke W.F."/>
            <person name="Gajer P."/>
            <person name="Crabtree J."/>
            <person name="Sebaihia M."/>
            <person name="Thomson N.R."/>
            <person name="Chaudhuri R."/>
            <person name="Henderson I.R."/>
            <person name="Sperandio V."/>
            <person name="Ravel J."/>
        </authorList>
    </citation>
    <scope>NUCLEOTIDE SEQUENCE [LARGE SCALE GENOMIC DNA]</scope>
    <source>
        <strain>HS</strain>
    </source>
</reference>
<protein>
    <recommendedName>
        <fullName evidence="1">Large ribosomal subunit protein uL6</fullName>
    </recommendedName>
    <alternativeName>
        <fullName evidence="2">50S ribosomal protein L6</fullName>
    </alternativeName>
</protein>
<accession>A8A5B0</accession>
<dbReference type="EMBL" id="CP000802">
    <property type="protein sequence ID" value="ABV07714.1"/>
    <property type="molecule type" value="Genomic_DNA"/>
</dbReference>
<dbReference type="RefSeq" id="WP_000091945.1">
    <property type="nucleotide sequence ID" value="NC_009800.1"/>
</dbReference>
<dbReference type="SMR" id="A8A5B0"/>
<dbReference type="GeneID" id="86948169"/>
<dbReference type="KEGG" id="ecx:EcHS_A3499"/>
<dbReference type="HOGENOM" id="CLU_065464_1_2_6"/>
<dbReference type="GO" id="GO:0022625">
    <property type="term" value="C:cytosolic large ribosomal subunit"/>
    <property type="evidence" value="ECO:0007669"/>
    <property type="project" value="TreeGrafter"/>
</dbReference>
<dbReference type="GO" id="GO:0019843">
    <property type="term" value="F:rRNA binding"/>
    <property type="evidence" value="ECO:0007669"/>
    <property type="project" value="UniProtKB-UniRule"/>
</dbReference>
<dbReference type="GO" id="GO:0003735">
    <property type="term" value="F:structural constituent of ribosome"/>
    <property type="evidence" value="ECO:0007669"/>
    <property type="project" value="InterPro"/>
</dbReference>
<dbReference type="GO" id="GO:0002181">
    <property type="term" value="P:cytoplasmic translation"/>
    <property type="evidence" value="ECO:0007669"/>
    <property type="project" value="TreeGrafter"/>
</dbReference>
<dbReference type="FunFam" id="3.90.930.12:FF:000001">
    <property type="entry name" value="50S ribosomal protein L6"/>
    <property type="match status" value="1"/>
</dbReference>
<dbReference type="FunFam" id="3.90.930.12:FF:000002">
    <property type="entry name" value="50S ribosomal protein L6"/>
    <property type="match status" value="1"/>
</dbReference>
<dbReference type="Gene3D" id="3.90.930.12">
    <property type="entry name" value="Ribosomal protein L6, alpha-beta domain"/>
    <property type="match status" value="2"/>
</dbReference>
<dbReference type="HAMAP" id="MF_01365_B">
    <property type="entry name" value="Ribosomal_uL6_B"/>
    <property type="match status" value="1"/>
</dbReference>
<dbReference type="InterPro" id="IPR000702">
    <property type="entry name" value="Ribosomal_uL6-like"/>
</dbReference>
<dbReference type="InterPro" id="IPR036789">
    <property type="entry name" value="Ribosomal_uL6-like_a/b-dom_sf"/>
</dbReference>
<dbReference type="InterPro" id="IPR020040">
    <property type="entry name" value="Ribosomal_uL6_a/b-dom"/>
</dbReference>
<dbReference type="InterPro" id="IPR019906">
    <property type="entry name" value="Ribosomal_uL6_bac-type"/>
</dbReference>
<dbReference type="InterPro" id="IPR002358">
    <property type="entry name" value="Ribosomal_uL6_CS"/>
</dbReference>
<dbReference type="NCBIfam" id="TIGR03654">
    <property type="entry name" value="L6_bact"/>
    <property type="match status" value="1"/>
</dbReference>
<dbReference type="PANTHER" id="PTHR11655">
    <property type="entry name" value="60S/50S RIBOSOMAL PROTEIN L6/L9"/>
    <property type="match status" value="1"/>
</dbReference>
<dbReference type="PANTHER" id="PTHR11655:SF14">
    <property type="entry name" value="LARGE RIBOSOMAL SUBUNIT PROTEIN UL6M"/>
    <property type="match status" value="1"/>
</dbReference>
<dbReference type="Pfam" id="PF00347">
    <property type="entry name" value="Ribosomal_L6"/>
    <property type="match status" value="2"/>
</dbReference>
<dbReference type="PIRSF" id="PIRSF002162">
    <property type="entry name" value="Ribosomal_L6"/>
    <property type="match status" value="1"/>
</dbReference>
<dbReference type="PRINTS" id="PR00059">
    <property type="entry name" value="RIBOSOMALL6"/>
</dbReference>
<dbReference type="SUPFAM" id="SSF56053">
    <property type="entry name" value="Ribosomal protein L6"/>
    <property type="match status" value="2"/>
</dbReference>
<dbReference type="PROSITE" id="PS00525">
    <property type="entry name" value="RIBOSOMAL_L6_1"/>
    <property type="match status" value="1"/>
</dbReference>
<gene>
    <name evidence="1" type="primary">rplF</name>
    <name type="ordered locus">EcHS_A3499</name>
</gene>
<organism>
    <name type="scientific">Escherichia coli O9:H4 (strain HS)</name>
    <dbReference type="NCBI Taxonomy" id="331112"/>
    <lineage>
        <taxon>Bacteria</taxon>
        <taxon>Pseudomonadati</taxon>
        <taxon>Pseudomonadota</taxon>
        <taxon>Gammaproteobacteria</taxon>
        <taxon>Enterobacterales</taxon>
        <taxon>Enterobacteriaceae</taxon>
        <taxon>Escherichia</taxon>
    </lineage>
</organism>
<feature type="chain" id="PRO_1000067978" description="Large ribosomal subunit protein uL6">
    <location>
        <begin position="1"/>
        <end position="177"/>
    </location>
</feature>
<feature type="modified residue" description="N6-acetyllysine" evidence="1">
    <location>
        <position position="44"/>
    </location>
</feature>
<keyword id="KW-0007">Acetylation</keyword>
<keyword id="KW-0687">Ribonucleoprotein</keyword>
<keyword id="KW-0689">Ribosomal protein</keyword>
<keyword id="KW-0694">RNA-binding</keyword>
<keyword id="KW-0699">rRNA-binding</keyword>
<name>RL6_ECOHS</name>
<evidence type="ECO:0000255" key="1">
    <source>
        <dbReference type="HAMAP-Rule" id="MF_01365"/>
    </source>
</evidence>
<evidence type="ECO:0000305" key="2"/>
<comment type="function">
    <text evidence="1">This protein binds to the 23S rRNA, and is important in its secondary structure. It is located near the subunit interface in the base of the L7/L12 stalk, and near the tRNA binding site of the peptidyltransferase center.</text>
</comment>
<comment type="subunit">
    <text evidence="1">Part of the 50S ribosomal subunit.</text>
</comment>
<comment type="similarity">
    <text evidence="1">Belongs to the universal ribosomal protein uL6 family.</text>
</comment>
<proteinExistence type="inferred from homology"/>
<sequence>MSRVAKAPVVVPAGVDVKINGQVITIKGKNGELTRTLNDAVEVKHADNTLTFGPRDGYADGWAQAGTARALLNSMVIGVTEGFTKKLQLVGVGYRAAVKGNVINLSLGFSHPVDHQLPAGITAECPTQTEIVLKGADKQVIGQVAADLRAYRRPEPYKGKGVRYADEVVRTKEAKKK</sequence>